<reference key="1">
    <citation type="journal article" date="2014" name="Plant J.">
        <title>The plant glycosyltransferase clone collection for functional genomics.</title>
        <authorList>
            <person name="Lao J."/>
            <person name="Oikawa A."/>
            <person name="Bromley J.R."/>
            <person name="McInerney P."/>
            <person name="Suttangkakul A."/>
            <person name="Smith-Moritz A.M."/>
            <person name="Plahar H."/>
            <person name="Chiu T.-Y."/>
            <person name="Gonzalez Fernandez-Nino S.M.G."/>
            <person name="Ebert B."/>
            <person name="Yang F."/>
            <person name="Christiansen K.M."/>
            <person name="Hansen S.F."/>
            <person name="Stonebloom S."/>
            <person name="Adams P.D."/>
            <person name="Ronald P.C."/>
            <person name="Hillson N.J."/>
            <person name="Hadi M.Z."/>
            <person name="Vega-Sanchez M.E."/>
            <person name="Loque D."/>
            <person name="Scheller H.V."/>
            <person name="Heazlewood J.L."/>
        </authorList>
    </citation>
    <scope>NUCLEOTIDE SEQUENCE [MRNA]</scope>
    <source>
        <strain>cv. Columbia</strain>
    </source>
</reference>
<reference key="2">
    <citation type="journal article" date="2000" name="Nature">
        <title>Sequence and analysis of chromosome 1 of the plant Arabidopsis thaliana.</title>
        <authorList>
            <person name="Theologis A."/>
            <person name="Ecker J.R."/>
            <person name="Palm C.J."/>
            <person name="Federspiel N.A."/>
            <person name="Kaul S."/>
            <person name="White O."/>
            <person name="Alonso J."/>
            <person name="Altafi H."/>
            <person name="Araujo R."/>
            <person name="Bowman C.L."/>
            <person name="Brooks S.Y."/>
            <person name="Buehler E."/>
            <person name="Chan A."/>
            <person name="Chao Q."/>
            <person name="Chen H."/>
            <person name="Cheuk R.F."/>
            <person name="Chin C.W."/>
            <person name="Chung M.K."/>
            <person name="Conn L."/>
            <person name="Conway A.B."/>
            <person name="Conway A.R."/>
            <person name="Creasy T.H."/>
            <person name="Dewar K."/>
            <person name="Dunn P."/>
            <person name="Etgu P."/>
            <person name="Feldblyum T.V."/>
            <person name="Feng J.-D."/>
            <person name="Fong B."/>
            <person name="Fujii C.Y."/>
            <person name="Gill J.E."/>
            <person name="Goldsmith A.D."/>
            <person name="Haas B."/>
            <person name="Hansen N.F."/>
            <person name="Hughes B."/>
            <person name="Huizar L."/>
            <person name="Hunter J.L."/>
            <person name="Jenkins J."/>
            <person name="Johnson-Hopson C."/>
            <person name="Khan S."/>
            <person name="Khaykin E."/>
            <person name="Kim C.J."/>
            <person name="Koo H.L."/>
            <person name="Kremenetskaia I."/>
            <person name="Kurtz D.B."/>
            <person name="Kwan A."/>
            <person name="Lam B."/>
            <person name="Langin-Hooper S."/>
            <person name="Lee A."/>
            <person name="Lee J.M."/>
            <person name="Lenz C.A."/>
            <person name="Li J.H."/>
            <person name="Li Y.-P."/>
            <person name="Lin X."/>
            <person name="Liu S.X."/>
            <person name="Liu Z.A."/>
            <person name="Luros J.S."/>
            <person name="Maiti R."/>
            <person name="Marziali A."/>
            <person name="Militscher J."/>
            <person name="Miranda M."/>
            <person name="Nguyen M."/>
            <person name="Nierman W.C."/>
            <person name="Osborne B.I."/>
            <person name="Pai G."/>
            <person name="Peterson J."/>
            <person name="Pham P.K."/>
            <person name="Rizzo M."/>
            <person name="Rooney T."/>
            <person name="Rowley D."/>
            <person name="Sakano H."/>
            <person name="Salzberg S.L."/>
            <person name="Schwartz J.R."/>
            <person name="Shinn P."/>
            <person name="Southwick A.M."/>
            <person name="Sun H."/>
            <person name="Tallon L.J."/>
            <person name="Tambunga G."/>
            <person name="Toriumi M.J."/>
            <person name="Town C.D."/>
            <person name="Utterback T."/>
            <person name="Van Aken S."/>
            <person name="Vaysberg M."/>
            <person name="Vysotskaia V.S."/>
            <person name="Walker M."/>
            <person name="Wu D."/>
            <person name="Yu G."/>
            <person name="Fraser C.M."/>
            <person name="Venter J.C."/>
            <person name="Davis R.W."/>
        </authorList>
    </citation>
    <scope>NUCLEOTIDE SEQUENCE [LARGE SCALE GENOMIC DNA]</scope>
    <source>
        <strain>cv. Columbia</strain>
    </source>
</reference>
<reference key="3">
    <citation type="journal article" date="2017" name="Plant J.">
        <title>Araport11: a complete reannotation of the Arabidopsis thaliana reference genome.</title>
        <authorList>
            <person name="Cheng C.Y."/>
            <person name="Krishnakumar V."/>
            <person name="Chan A.P."/>
            <person name="Thibaud-Nissen F."/>
            <person name="Schobel S."/>
            <person name="Town C.D."/>
        </authorList>
    </citation>
    <scope>GENOME REANNOTATION</scope>
    <source>
        <strain>cv. Columbia</strain>
    </source>
</reference>
<reference key="4">
    <citation type="journal article" date="2003" name="Science">
        <title>Empirical analysis of transcriptional activity in the Arabidopsis genome.</title>
        <authorList>
            <person name="Yamada K."/>
            <person name="Lim J."/>
            <person name="Dale J.M."/>
            <person name="Chen H."/>
            <person name="Shinn P."/>
            <person name="Palm C.J."/>
            <person name="Southwick A.M."/>
            <person name="Wu H.C."/>
            <person name="Kim C.J."/>
            <person name="Nguyen M."/>
            <person name="Pham P.K."/>
            <person name="Cheuk R.F."/>
            <person name="Karlin-Newmann G."/>
            <person name="Liu S.X."/>
            <person name="Lam B."/>
            <person name="Sakano H."/>
            <person name="Wu T."/>
            <person name="Yu G."/>
            <person name="Miranda M."/>
            <person name="Quach H.L."/>
            <person name="Tripp M."/>
            <person name="Chang C.H."/>
            <person name="Lee J.M."/>
            <person name="Toriumi M.J."/>
            <person name="Chan M.M."/>
            <person name="Tang C.C."/>
            <person name="Onodera C.S."/>
            <person name="Deng J.M."/>
            <person name="Akiyama K."/>
            <person name="Ansari Y."/>
            <person name="Arakawa T."/>
            <person name="Banh J."/>
            <person name="Banno F."/>
            <person name="Bowser L."/>
            <person name="Brooks S.Y."/>
            <person name="Carninci P."/>
            <person name="Chao Q."/>
            <person name="Choy N."/>
            <person name="Enju A."/>
            <person name="Goldsmith A.D."/>
            <person name="Gurjal M."/>
            <person name="Hansen N.F."/>
            <person name="Hayashizaki Y."/>
            <person name="Johnson-Hopson C."/>
            <person name="Hsuan V.W."/>
            <person name="Iida K."/>
            <person name="Karnes M."/>
            <person name="Khan S."/>
            <person name="Koesema E."/>
            <person name="Ishida J."/>
            <person name="Jiang P.X."/>
            <person name="Jones T."/>
            <person name="Kawai J."/>
            <person name="Kamiya A."/>
            <person name="Meyers C."/>
            <person name="Nakajima M."/>
            <person name="Narusaka M."/>
            <person name="Seki M."/>
            <person name="Sakurai T."/>
            <person name="Satou M."/>
            <person name="Tamse R."/>
            <person name="Vaysberg M."/>
            <person name="Wallender E.K."/>
            <person name="Wong C."/>
            <person name="Yamamura Y."/>
            <person name="Yuan S."/>
            <person name="Shinozaki K."/>
            <person name="Davis R.W."/>
            <person name="Theologis A."/>
            <person name="Ecker J.R."/>
        </authorList>
    </citation>
    <scope>NUCLEOTIDE SEQUENCE [LARGE SCALE MRNA]</scope>
    <source>
        <strain>cv. Columbia</strain>
    </source>
</reference>
<reference key="5">
    <citation type="journal article" date="2010" name="J. Integr. Plant Biol.">
        <title>MALE GAMETOPHYTE DEFECTIVE 2, encoding a sialyltransferase-like protein, is required for normal pollen germination and pollen tube growth in Arabidopsis.</title>
        <authorList>
            <person name="Deng Y."/>
            <person name="Wang W."/>
            <person name="Li W.Q."/>
            <person name="Xia C."/>
            <person name="Liao H.Z."/>
            <person name="Zhang X.Q."/>
            <person name="Ye D."/>
        </authorList>
    </citation>
    <scope>FUNCTION</scope>
    <scope>SUBCELLULAR LOCATION</scope>
    <scope>TISSUE SPECIFICITY</scope>
    <scope>DISRUPTION PHENOTYPE</scope>
</reference>
<gene>
    <name evidence="6" type="primary">SIA1</name>
    <name evidence="5" type="synonym">MGP2</name>
    <name evidence="7" type="ordered locus">At1g08660</name>
    <name evidence="8" type="ORF">F22O13.14</name>
</gene>
<dbReference type="EC" id="2.4.-.-" evidence="6"/>
<dbReference type="EMBL" id="KJ139019">
    <property type="protein sequence ID" value="AHL38959.1"/>
    <property type="molecule type" value="mRNA"/>
</dbReference>
<dbReference type="EMBL" id="AC003981">
    <property type="protein sequence ID" value="AAF99778.1"/>
    <property type="status" value="ALT_SEQ"/>
    <property type="molecule type" value="Genomic_DNA"/>
</dbReference>
<dbReference type="EMBL" id="CP002684">
    <property type="protein sequence ID" value="AEE28328.1"/>
    <property type="molecule type" value="Genomic_DNA"/>
</dbReference>
<dbReference type="EMBL" id="AY064135">
    <property type="protein sequence ID" value="AAL36042.1"/>
    <property type="molecule type" value="mRNA"/>
</dbReference>
<dbReference type="EMBL" id="AY124807">
    <property type="protein sequence ID" value="AAM70516.1"/>
    <property type="molecule type" value="mRNA"/>
</dbReference>
<dbReference type="PIR" id="T00720">
    <property type="entry name" value="T00720"/>
</dbReference>
<dbReference type="RefSeq" id="NP_850940.1">
    <molecule id="Q8VZJ0-1"/>
    <property type="nucleotide sequence ID" value="NM_180609.4"/>
</dbReference>
<dbReference type="FunCoup" id="Q8VZJ0">
    <property type="interactions" value="1117"/>
</dbReference>
<dbReference type="STRING" id="3702.Q8VZJ0"/>
<dbReference type="CAZy" id="GT29">
    <property type="family name" value="Glycosyltransferase Family 29"/>
</dbReference>
<dbReference type="GlyCosmos" id="Q8VZJ0">
    <property type="glycosylation" value="4 sites, No reported glycans"/>
</dbReference>
<dbReference type="GlyGen" id="Q8VZJ0">
    <property type="glycosylation" value="4 sites"/>
</dbReference>
<dbReference type="PaxDb" id="3702-AT1G08660.1"/>
<dbReference type="ProteomicsDB" id="234577">
    <molecule id="Q8VZJ0-1"/>
</dbReference>
<dbReference type="DNASU" id="837388"/>
<dbReference type="EnsemblPlants" id="AT1G08660.1">
    <molecule id="Q8VZJ0-1"/>
    <property type="protein sequence ID" value="AT1G08660.1"/>
    <property type="gene ID" value="AT1G08660"/>
</dbReference>
<dbReference type="GeneID" id="837388"/>
<dbReference type="Gramene" id="AT1G08660.1">
    <molecule id="Q8VZJ0-1"/>
    <property type="protein sequence ID" value="AT1G08660.1"/>
    <property type="gene ID" value="AT1G08660"/>
</dbReference>
<dbReference type="KEGG" id="ath:AT1G08660"/>
<dbReference type="Araport" id="AT1G08660"/>
<dbReference type="TAIR" id="AT1G08660">
    <property type="gene designation" value="MGP2"/>
</dbReference>
<dbReference type="eggNOG" id="KOG2692">
    <property type="taxonomic scope" value="Eukaryota"/>
</dbReference>
<dbReference type="HOGENOM" id="CLU_039790_0_0_1"/>
<dbReference type="InParanoid" id="Q8VZJ0"/>
<dbReference type="OMA" id="YSYDVCE"/>
<dbReference type="OrthoDB" id="10264956at2759"/>
<dbReference type="PhylomeDB" id="Q8VZJ0"/>
<dbReference type="PRO" id="PR:Q8VZJ0"/>
<dbReference type="Proteomes" id="UP000006548">
    <property type="component" value="Chromosome 1"/>
</dbReference>
<dbReference type="ExpressionAtlas" id="Q8VZJ0">
    <property type="expression patterns" value="baseline and differential"/>
</dbReference>
<dbReference type="GO" id="GO:0005768">
    <property type="term" value="C:endosome"/>
    <property type="evidence" value="ECO:0007005"/>
    <property type="project" value="TAIR"/>
</dbReference>
<dbReference type="GO" id="GO:0005794">
    <property type="term" value="C:Golgi apparatus"/>
    <property type="evidence" value="ECO:0000314"/>
    <property type="project" value="TAIR"/>
</dbReference>
<dbReference type="GO" id="GO:0000139">
    <property type="term" value="C:Golgi membrane"/>
    <property type="evidence" value="ECO:0007669"/>
    <property type="project" value="UniProtKB-SubCell"/>
</dbReference>
<dbReference type="GO" id="GO:0000138">
    <property type="term" value="C:Golgi trans cisterna"/>
    <property type="evidence" value="ECO:0000314"/>
    <property type="project" value="TAIR"/>
</dbReference>
<dbReference type="GO" id="GO:0005802">
    <property type="term" value="C:trans-Golgi network"/>
    <property type="evidence" value="ECO:0007005"/>
    <property type="project" value="TAIR"/>
</dbReference>
<dbReference type="GO" id="GO:0008373">
    <property type="term" value="F:sialyltransferase activity"/>
    <property type="evidence" value="ECO:0007669"/>
    <property type="project" value="InterPro"/>
</dbReference>
<dbReference type="GO" id="GO:0009846">
    <property type="term" value="P:pollen germination"/>
    <property type="evidence" value="ECO:0000315"/>
    <property type="project" value="TAIR"/>
</dbReference>
<dbReference type="GO" id="GO:0009860">
    <property type="term" value="P:pollen tube growth"/>
    <property type="evidence" value="ECO:0000315"/>
    <property type="project" value="TAIR"/>
</dbReference>
<dbReference type="GO" id="GO:0006486">
    <property type="term" value="P:protein glycosylation"/>
    <property type="evidence" value="ECO:0007669"/>
    <property type="project" value="InterPro"/>
</dbReference>
<dbReference type="CDD" id="cd19952">
    <property type="entry name" value="GT29"/>
    <property type="match status" value="1"/>
</dbReference>
<dbReference type="FunFam" id="3.90.1480.20:FF:000019">
    <property type="entry name" value="Glycosyl transferase family 29 protein"/>
    <property type="match status" value="1"/>
</dbReference>
<dbReference type="Gene3D" id="3.90.1480.20">
    <property type="entry name" value="Glycosyl transferase family 29"/>
    <property type="match status" value="1"/>
</dbReference>
<dbReference type="InterPro" id="IPR001675">
    <property type="entry name" value="Glyco_trans_29"/>
</dbReference>
<dbReference type="InterPro" id="IPR038578">
    <property type="entry name" value="GT29-like_sf"/>
</dbReference>
<dbReference type="InterPro" id="IPR044782">
    <property type="entry name" value="SIA1/STLP5"/>
</dbReference>
<dbReference type="PANTHER" id="PTHR47486">
    <property type="entry name" value="SIALYLTRANSFERASE-LIKE PROTEIN 1"/>
    <property type="match status" value="1"/>
</dbReference>
<dbReference type="PANTHER" id="PTHR47486:SF1">
    <property type="entry name" value="SIALYLTRANSFERASE-LIKE PROTEIN 1"/>
    <property type="match status" value="1"/>
</dbReference>
<dbReference type="Pfam" id="PF00777">
    <property type="entry name" value="Glyco_transf_29"/>
    <property type="match status" value="1"/>
</dbReference>
<comment type="function">
    <text evidence="4">Required for normal pollen grain germination and pollen tube growth. May not be required for pollen development and female gametophytic function.</text>
</comment>
<comment type="subcellular location">
    <subcellularLocation>
        <location evidence="4">Golgi apparatus membrane</location>
        <topology evidence="6">Single-pass type II membrane protein</topology>
    </subcellularLocation>
</comment>
<comment type="alternative products">
    <event type="alternative splicing"/>
    <isoform>
        <id>Q8VZJ0-1</id>
        <name>1</name>
        <sequence type="displayed"/>
    </isoform>
    <text evidence="6">A number of isoforms are produced. According to EST sequences.</text>
</comment>
<comment type="tissue specificity">
    <text evidence="4">Highly expressed in inflorescences and siliques and at lower levels in roots, leaves and stems.</text>
</comment>
<comment type="disruption phenotype">
    <text evidence="4">Inhibition of pollen germination and retarded pollen tube growth.</text>
</comment>
<comment type="similarity">
    <text evidence="6">Belongs to the glycosyltransferase 29 family.</text>
</comment>
<comment type="sequence caution" evidence="6">
    <conflict type="erroneous gene model prediction">
        <sequence resource="EMBL-CDS" id="AAF99778"/>
    </conflict>
</comment>
<proteinExistence type="evidence at transcript level"/>
<protein>
    <recommendedName>
        <fullName evidence="6">Sialyltransferase-like protein 1</fullName>
        <ecNumber evidence="6">2.4.-.-</ecNumber>
    </recommendedName>
    <alternativeName>
        <fullName evidence="5">Protein MALE GAMETOPHYTE DEFECTIVE 2</fullName>
    </alternativeName>
</protein>
<organism>
    <name type="scientific">Arabidopsis thaliana</name>
    <name type="common">Mouse-ear cress</name>
    <dbReference type="NCBI Taxonomy" id="3702"/>
    <lineage>
        <taxon>Eukaryota</taxon>
        <taxon>Viridiplantae</taxon>
        <taxon>Streptophyta</taxon>
        <taxon>Embryophyta</taxon>
        <taxon>Tracheophyta</taxon>
        <taxon>Spermatophyta</taxon>
        <taxon>Magnoliopsida</taxon>
        <taxon>eudicotyledons</taxon>
        <taxon>Gunneridae</taxon>
        <taxon>Pentapetalae</taxon>
        <taxon>rosids</taxon>
        <taxon>malvids</taxon>
        <taxon>Brassicales</taxon>
        <taxon>Brassicaceae</taxon>
        <taxon>Camelineae</taxon>
        <taxon>Arabidopsis</taxon>
    </lineage>
</organism>
<feature type="chain" id="PRO_0000434309" description="Sialyltransferase-like protein 1">
    <location>
        <begin position="1"/>
        <end position="474"/>
    </location>
</feature>
<feature type="topological domain" description="Cytoplasmic" evidence="6">
    <location>
        <begin position="1"/>
        <end position="14"/>
    </location>
</feature>
<feature type="transmembrane region" description="Helical; Signal-anchor for type II membrane protein" evidence="1">
    <location>
        <begin position="15"/>
        <end position="35"/>
    </location>
</feature>
<feature type="topological domain" description="Lumenal" evidence="6">
    <location>
        <begin position="36"/>
        <end position="474"/>
    </location>
</feature>
<feature type="region of interest" description="Disordered" evidence="3">
    <location>
        <begin position="376"/>
        <end position="421"/>
    </location>
</feature>
<feature type="glycosylation site" description="N-linked (GlcNAc...) asparagine" evidence="2">
    <location>
        <position position="88"/>
    </location>
</feature>
<feature type="glycosylation site" description="N-linked (GlcNAc...) asparagine" evidence="2">
    <location>
        <position position="120"/>
    </location>
</feature>
<feature type="glycosylation site" description="N-linked (GlcNAc...) asparagine" evidence="2">
    <location>
        <position position="155"/>
    </location>
</feature>
<feature type="glycosylation site" description="N-linked (GlcNAc...) asparagine" evidence="2">
    <location>
        <position position="243"/>
    </location>
</feature>
<sequence length="474" mass="54216">MRSHQAGRKLPLLQLLGCVAVFSVFVFTIQSSFFADNNRKLDLQPEDIQILSDFQSSVQQCVANRGLGLSAHIIDHCNLILKFPEGTNSTWYNAQFKVFEALEFKYNVCEAVLLWEQYRNMTTVLTREYLDVRPDGWLDYAAMRIAQLGADKCYNRTLCEEHLNVILPAKPPFHPRQFHKCAVVGNSGDLLKTEFGEEIDSHDAVFRDNEAPVNEKYAKYVGVKRDFRLVVRGAARNMIKILNGSDNEVLIIKSVTHRDFNEMIKRIPNPVYLFQGIVLRRGAKGTGMKSIELALSMCDIVDIYGFTVDPGYTEWTRYFSTPRKGHNPLQGRAYYQLLECLGVIRIHSPMRSERKEDWSSVPSREMISRAHTAALRLQRSQQPTSSKRDGSGQFGNCKVWGDADPTKGPVSGSPDMSETRKKSNYKKWEVMPFRSLRKEARDHYIQMKGVSQYKMDGNKLDDLVCVRHPLKLDT</sequence>
<evidence type="ECO:0000255" key="1"/>
<evidence type="ECO:0000255" key="2">
    <source>
        <dbReference type="PROSITE-ProRule" id="PRU00498"/>
    </source>
</evidence>
<evidence type="ECO:0000256" key="3">
    <source>
        <dbReference type="SAM" id="MobiDB-lite"/>
    </source>
</evidence>
<evidence type="ECO:0000269" key="4">
    <source>
    </source>
</evidence>
<evidence type="ECO:0000303" key="5">
    <source>
    </source>
</evidence>
<evidence type="ECO:0000305" key="6"/>
<evidence type="ECO:0000312" key="7">
    <source>
        <dbReference type="Araport" id="AT1G08660"/>
    </source>
</evidence>
<evidence type="ECO:0000312" key="8">
    <source>
        <dbReference type="EMBL" id="AAF99778.1"/>
    </source>
</evidence>
<name>SIA1_ARATH</name>
<keyword id="KW-0025">Alternative splicing</keyword>
<keyword id="KW-0325">Glycoprotein</keyword>
<keyword id="KW-0328">Glycosyltransferase</keyword>
<keyword id="KW-0333">Golgi apparatus</keyword>
<keyword id="KW-0472">Membrane</keyword>
<keyword id="KW-1185">Reference proteome</keyword>
<keyword id="KW-0735">Signal-anchor</keyword>
<keyword id="KW-0808">Transferase</keyword>
<keyword id="KW-0812">Transmembrane</keyword>
<keyword id="KW-1133">Transmembrane helix</keyword>
<accession>Q8VZJ0</accession>
<accession>Q9FRR9</accession>